<protein>
    <recommendedName>
        <fullName evidence="1">UDP-3-O-acyl-N-acetylglucosamine deacetylase</fullName>
        <shortName evidence="1">UDP-3-O-acyl-GlcNAc deacetylase</shortName>
        <ecNumber evidence="1">3.5.1.108</ecNumber>
    </recommendedName>
    <alternativeName>
        <fullName evidence="1">UDP-3-O-[R-3-hydroxymyristoyl]-N-acetylglucosamine deacetylase</fullName>
    </alternativeName>
</protein>
<gene>
    <name evidence="1" type="primary">lpxC</name>
    <name type="ordered locus">PputGB1_4506</name>
</gene>
<keyword id="KW-0378">Hydrolase</keyword>
<keyword id="KW-0441">Lipid A biosynthesis</keyword>
<keyword id="KW-0444">Lipid biosynthesis</keyword>
<keyword id="KW-0443">Lipid metabolism</keyword>
<keyword id="KW-0479">Metal-binding</keyword>
<keyword id="KW-0862">Zinc</keyword>
<comment type="function">
    <text evidence="1">Catalyzes the hydrolysis of UDP-3-O-myristoyl-N-acetylglucosamine to form UDP-3-O-myristoylglucosamine and acetate, the committed step in lipid A biosynthesis.</text>
</comment>
<comment type="catalytic activity">
    <reaction evidence="1">
        <text>a UDP-3-O-[(3R)-3-hydroxyacyl]-N-acetyl-alpha-D-glucosamine + H2O = a UDP-3-O-[(3R)-3-hydroxyacyl]-alpha-D-glucosamine + acetate</text>
        <dbReference type="Rhea" id="RHEA:67816"/>
        <dbReference type="ChEBI" id="CHEBI:15377"/>
        <dbReference type="ChEBI" id="CHEBI:30089"/>
        <dbReference type="ChEBI" id="CHEBI:137740"/>
        <dbReference type="ChEBI" id="CHEBI:173225"/>
        <dbReference type="EC" id="3.5.1.108"/>
    </reaction>
</comment>
<comment type="cofactor">
    <cofactor evidence="1">
        <name>Zn(2+)</name>
        <dbReference type="ChEBI" id="CHEBI:29105"/>
    </cofactor>
</comment>
<comment type="pathway">
    <text evidence="1">Glycolipid biosynthesis; lipid IV(A) biosynthesis; lipid IV(A) from (3R)-3-hydroxytetradecanoyl-[acyl-carrier-protein] and UDP-N-acetyl-alpha-D-glucosamine: step 2/6.</text>
</comment>
<comment type="similarity">
    <text evidence="1">Belongs to the LpxC family.</text>
</comment>
<feature type="chain" id="PRO_1000080224" description="UDP-3-O-acyl-N-acetylglucosamine deacetylase">
    <location>
        <begin position="1"/>
        <end position="303"/>
    </location>
</feature>
<feature type="active site" description="Proton donor" evidence="1">
    <location>
        <position position="264"/>
    </location>
</feature>
<feature type="binding site" evidence="1">
    <location>
        <position position="78"/>
    </location>
    <ligand>
        <name>Zn(2+)</name>
        <dbReference type="ChEBI" id="CHEBI:29105"/>
    </ligand>
</feature>
<feature type="binding site" evidence="1">
    <location>
        <position position="237"/>
    </location>
    <ligand>
        <name>Zn(2+)</name>
        <dbReference type="ChEBI" id="CHEBI:29105"/>
    </ligand>
</feature>
<feature type="binding site" evidence="1">
    <location>
        <position position="241"/>
    </location>
    <ligand>
        <name>Zn(2+)</name>
        <dbReference type="ChEBI" id="CHEBI:29105"/>
    </ligand>
</feature>
<reference key="1">
    <citation type="submission" date="2008-01" db="EMBL/GenBank/DDBJ databases">
        <title>Complete sequence of Pseudomonas putida GB-1.</title>
        <authorList>
            <consortium name="US DOE Joint Genome Institute"/>
            <person name="Copeland A."/>
            <person name="Lucas S."/>
            <person name="Lapidus A."/>
            <person name="Barry K."/>
            <person name="Glavina del Rio T."/>
            <person name="Dalin E."/>
            <person name="Tice H."/>
            <person name="Pitluck S."/>
            <person name="Bruce D."/>
            <person name="Goodwin L."/>
            <person name="Chertkov O."/>
            <person name="Brettin T."/>
            <person name="Detter J.C."/>
            <person name="Han C."/>
            <person name="Kuske C.R."/>
            <person name="Schmutz J."/>
            <person name="Larimer F."/>
            <person name="Land M."/>
            <person name="Hauser L."/>
            <person name="Kyrpides N."/>
            <person name="Kim E."/>
            <person name="McCarthy J.K."/>
            <person name="Richardson P."/>
        </authorList>
    </citation>
    <scope>NUCLEOTIDE SEQUENCE [LARGE SCALE GENOMIC DNA]</scope>
    <source>
        <strain>GB-1</strain>
    </source>
</reference>
<organism>
    <name type="scientific">Pseudomonas putida (strain GB-1)</name>
    <dbReference type="NCBI Taxonomy" id="76869"/>
    <lineage>
        <taxon>Bacteria</taxon>
        <taxon>Pseudomonadati</taxon>
        <taxon>Pseudomonadota</taxon>
        <taxon>Gammaproteobacteria</taxon>
        <taxon>Pseudomonadales</taxon>
        <taxon>Pseudomonadaceae</taxon>
        <taxon>Pseudomonas</taxon>
    </lineage>
</organism>
<dbReference type="EC" id="3.5.1.108" evidence="1"/>
<dbReference type="EMBL" id="CP000926">
    <property type="protein sequence ID" value="ABZ00393.1"/>
    <property type="molecule type" value="Genomic_DNA"/>
</dbReference>
<dbReference type="RefSeq" id="WP_012274053.1">
    <property type="nucleotide sequence ID" value="NC_010322.1"/>
</dbReference>
<dbReference type="SMR" id="B0KFS0"/>
<dbReference type="KEGG" id="ppg:PputGB1_4506"/>
<dbReference type="eggNOG" id="COG0774">
    <property type="taxonomic scope" value="Bacteria"/>
</dbReference>
<dbReference type="HOGENOM" id="CLU_046528_1_0_6"/>
<dbReference type="UniPathway" id="UPA00359">
    <property type="reaction ID" value="UER00478"/>
</dbReference>
<dbReference type="Proteomes" id="UP000002157">
    <property type="component" value="Chromosome"/>
</dbReference>
<dbReference type="GO" id="GO:0016020">
    <property type="term" value="C:membrane"/>
    <property type="evidence" value="ECO:0007669"/>
    <property type="project" value="GOC"/>
</dbReference>
<dbReference type="GO" id="GO:0046872">
    <property type="term" value="F:metal ion binding"/>
    <property type="evidence" value="ECO:0007669"/>
    <property type="project" value="UniProtKB-KW"/>
</dbReference>
<dbReference type="GO" id="GO:0103117">
    <property type="term" value="F:UDP-3-O-acyl-N-acetylglucosamine deacetylase activity"/>
    <property type="evidence" value="ECO:0007669"/>
    <property type="project" value="UniProtKB-UniRule"/>
</dbReference>
<dbReference type="GO" id="GO:0009245">
    <property type="term" value="P:lipid A biosynthetic process"/>
    <property type="evidence" value="ECO:0007669"/>
    <property type="project" value="UniProtKB-UniRule"/>
</dbReference>
<dbReference type="FunFam" id="3.30.230.20:FF:000001">
    <property type="entry name" value="UDP-3-O-acyl-N-acetylglucosamine deacetylase"/>
    <property type="match status" value="1"/>
</dbReference>
<dbReference type="Gene3D" id="3.30.230.20">
    <property type="entry name" value="lpxc deacetylase, domain 1"/>
    <property type="match status" value="1"/>
</dbReference>
<dbReference type="Gene3D" id="3.30.1700.10">
    <property type="entry name" value="lpxc deacetylase, domain 2"/>
    <property type="match status" value="1"/>
</dbReference>
<dbReference type="HAMAP" id="MF_00388">
    <property type="entry name" value="LpxC"/>
    <property type="match status" value="1"/>
</dbReference>
<dbReference type="InterPro" id="IPR020568">
    <property type="entry name" value="Ribosomal_Su5_D2-typ_SF"/>
</dbReference>
<dbReference type="InterPro" id="IPR004463">
    <property type="entry name" value="UDP-acyl_GlcNac_deAcase"/>
</dbReference>
<dbReference type="InterPro" id="IPR011334">
    <property type="entry name" value="UDP-acyl_GlcNac_deAcase_C"/>
</dbReference>
<dbReference type="InterPro" id="IPR015870">
    <property type="entry name" value="UDP-acyl_N-AcGlcN_deAcase_N"/>
</dbReference>
<dbReference type="NCBIfam" id="TIGR00325">
    <property type="entry name" value="lpxC"/>
    <property type="match status" value="1"/>
</dbReference>
<dbReference type="PANTHER" id="PTHR33694">
    <property type="entry name" value="UDP-3-O-ACYL-N-ACETYLGLUCOSAMINE DEACETYLASE 1, MITOCHONDRIAL-RELATED"/>
    <property type="match status" value="1"/>
</dbReference>
<dbReference type="PANTHER" id="PTHR33694:SF1">
    <property type="entry name" value="UDP-3-O-ACYL-N-ACETYLGLUCOSAMINE DEACETYLASE 1, MITOCHONDRIAL-RELATED"/>
    <property type="match status" value="1"/>
</dbReference>
<dbReference type="Pfam" id="PF03331">
    <property type="entry name" value="LpxC"/>
    <property type="match status" value="1"/>
</dbReference>
<dbReference type="SUPFAM" id="SSF54211">
    <property type="entry name" value="Ribosomal protein S5 domain 2-like"/>
    <property type="match status" value="2"/>
</dbReference>
<name>LPXC_PSEPG</name>
<evidence type="ECO:0000255" key="1">
    <source>
        <dbReference type="HAMAP-Rule" id="MF_00388"/>
    </source>
</evidence>
<accession>B0KFS0</accession>
<sequence>MIKQRTLKNTIRATGVGLHSGEKVYLTLKPAPVDTGIVFRRADLDPVVEIPARAANVGETTMSTTLVNGDVKVDTVEHLLSAMAGLGIDNAYVELSASEVPIMDGSAGPFVFLIQSAGLEEQDAAKKFIRILREVTVEEGDKRATFLPFEGFKVSFEIDFDHPVLRNRTQSASVDFSSTSFVKEVSRARTFGFMRDIEYLRKHNLALGGSVENAIVVDEDGVLNEDGLRYEDEFVKHKILDAIGDLYLLGNSLIGEFKGYKSGHALNNQLLRKLIAETDAWEVVTFEDASTAPISYMRPVAAV</sequence>
<proteinExistence type="inferred from homology"/>